<sequence length="279" mass="30879">MPTSNNYFHLHLVSDSTGETLITVARAVAAQYANVTPVEHVYPLVRSQKQLDRVLDEIEEAPGIVLFTLLEKDLVSRLEDKCKGINVPSLSIIGPVMQLFEAYLGAATTGRVGAQHVLNAEYFKRIDALNYTMIHDDGQHVEGLDDADVVLVGVSRTSKTPTSIYLANRGIRTANVPLVPGIPVPVQLETLTRPLVVSLHATPERLIQVRQNRLLSMGADSSSDTYTDRQSVAEEVAFARKLSAKHDWPLLDVTRRSIEETAAAIMKLYSDRQRNRPSE</sequence>
<evidence type="ECO:0000255" key="1">
    <source>
        <dbReference type="HAMAP-Rule" id="MF_00921"/>
    </source>
</evidence>
<keyword id="KW-0418">Kinase</keyword>
<keyword id="KW-0547">Nucleotide-binding</keyword>
<keyword id="KW-1185">Reference proteome</keyword>
<keyword id="KW-0723">Serine/threonine-protein kinase</keyword>
<keyword id="KW-0808">Transferase</keyword>
<dbReference type="EC" id="2.7.11.32" evidence="1"/>
<dbReference type="EC" id="2.7.4.27" evidence="1"/>
<dbReference type="EMBL" id="BA000040">
    <property type="protein sequence ID" value="BAC45902.1"/>
    <property type="molecule type" value="Genomic_DNA"/>
</dbReference>
<dbReference type="RefSeq" id="NP_767277.1">
    <property type="nucleotide sequence ID" value="NC_004463.1"/>
</dbReference>
<dbReference type="RefSeq" id="WP_011083464.1">
    <property type="nucleotide sequence ID" value="NC_004463.1"/>
</dbReference>
<dbReference type="SMR" id="Q89WP1"/>
<dbReference type="FunCoup" id="Q89WP1">
    <property type="interactions" value="301"/>
</dbReference>
<dbReference type="STRING" id="224911.AAV28_00020"/>
<dbReference type="EnsemblBacteria" id="BAC45902">
    <property type="protein sequence ID" value="BAC45902"/>
    <property type="gene ID" value="BAC45902"/>
</dbReference>
<dbReference type="GeneID" id="46487910"/>
<dbReference type="KEGG" id="bja:blr0637"/>
<dbReference type="PATRIC" id="fig|224911.44.peg.6"/>
<dbReference type="eggNOG" id="COG1806">
    <property type="taxonomic scope" value="Bacteria"/>
</dbReference>
<dbReference type="HOGENOM" id="CLU_046206_2_0_5"/>
<dbReference type="InParanoid" id="Q89WP1"/>
<dbReference type="OrthoDB" id="9782201at2"/>
<dbReference type="PhylomeDB" id="Q89WP1"/>
<dbReference type="Proteomes" id="UP000002526">
    <property type="component" value="Chromosome"/>
</dbReference>
<dbReference type="GO" id="GO:0043531">
    <property type="term" value="F:ADP binding"/>
    <property type="evidence" value="ECO:0007669"/>
    <property type="project" value="UniProtKB-UniRule"/>
</dbReference>
<dbReference type="GO" id="GO:0005524">
    <property type="term" value="F:ATP binding"/>
    <property type="evidence" value="ECO:0007669"/>
    <property type="project" value="InterPro"/>
</dbReference>
<dbReference type="GO" id="GO:0016776">
    <property type="term" value="F:phosphotransferase activity, phosphate group as acceptor"/>
    <property type="evidence" value="ECO:0007669"/>
    <property type="project" value="UniProtKB-UniRule"/>
</dbReference>
<dbReference type="GO" id="GO:0004674">
    <property type="term" value="F:protein serine/threonine kinase activity"/>
    <property type="evidence" value="ECO:0007669"/>
    <property type="project" value="UniProtKB-UniRule"/>
</dbReference>
<dbReference type="HAMAP" id="MF_00921">
    <property type="entry name" value="PDRP"/>
    <property type="match status" value="1"/>
</dbReference>
<dbReference type="InterPro" id="IPR005177">
    <property type="entry name" value="Kinase-pyrophosphorylase"/>
</dbReference>
<dbReference type="InterPro" id="IPR026565">
    <property type="entry name" value="PPDK_reg"/>
</dbReference>
<dbReference type="NCBIfam" id="NF003742">
    <property type="entry name" value="PRK05339.1"/>
    <property type="match status" value="1"/>
</dbReference>
<dbReference type="PANTHER" id="PTHR31756">
    <property type="entry name" value="PYRUVATE, PHOSPHATE DIKINASE REGULATORY PROTEIN 1, CHLOROPLASTIC"/>
    <property type="match status" value="1"/>
</dbReference>
<dbReference type="PANTHER" id="PTHR31756:SF3">
    <property type="entry name" value="PYRUVATE, PHOSPHATE DIKINASE REGULATORY PROTEIN 1, CHLOROPLASTIC"/>
    <property type="match status" value="1"/>
</dbReference>
<dbReference type="Pfam" id="PF03618">
    <property type="entry name" value="Kinase-PPPase"/>
    <property type="match status" value="1"/>
</dbReference>
<gene>
    <name type="ordered locus">blr0637</name>
</gene>
<protein>
    <recommendedName>
        <fullName evidence="1">Putative pyruvate, phosphate dikinase regulatory protein</fullName>
        <shortName evidence="1">PPDK regulatory protein</shortName>
        <ecNumber evidence="1">2.7.11.32</ecNumber>
        <ecNumber evidence="1">2.7.4.27</ecNumber>
    </recommendedName>
</protein>
<proteinExistence type="inferred from homology"/>
<comment type="function">
    <text evidence="1">Bifunctional serine/threonine kinase and phosphorylase involved in the regulation of the pyruvate, phosphate dikinase (PPDK) by catalyzing its phosphorylation/dephosphorylation.</text>
</comment>
<comment type="catalytic activity">
    <reaction evidence="1">
        <text>N(tele)-phospho-L-histidyl/L-threonyl-[pyruvate, phosphate dikinase] + ADP = N(tele)-phospho-L-histidyl/O-phospho-L-threonyl-[pyruvate, phosphate dikinase] + AMP + H(+)</text>
        <dbReference type="Rhea" id="RHEA:43692"/>
        <dbReference type="Rhea" id="RHEA-COMP:10650"/>
        <dbReference type="Rhea" id="RHEA-COMP:10651"/>
        <dbReference type="ChEBI" id="CHEBI:15378"/>
        <dbReference type="ChEBI" id="CHEBI:30013"/>
        <dbReference type="ChEBI" id="CHEBI:61977"/>
        <dbReference type="ChEBI" id="CHEBI:83586"/>
        <dbReference type="ChEBI" id="CHEBI:456215"/>
        <dbReference type="ChEBI" id="CHEBI:456216"/>
        <dbReference type="EC" id="2.7.11.32"/>
    </reaction>
</comment>
<comment type="catalytic activity">
    <reaction evidence="1">
        <text>N(tele)-phospho-L-histidyl/O-phospho-L-threonyl-[pyruvate, phosphate dikinase] + phosphate + H(+) = N(tele)-phospho-L-histidyl/L-threonyl-[pyruvate, phosphate dikinase] + diphosphate</text>
        <dbReference type="Rhea" id="RHEA:43696"/>
        <dbReference type="Rhea" id="RHEA-COMP:10650"/>
        <dbReference type="Rhea" id="RHEA-COMP:10651"/>
        <dbReference type="ChEBI" id="CHEBI:15378"/>
        <dbReference type="ChEBI" id="CHEBI:30013"/>
        <dbReference type="ChEBI" id="CHEBI:33019"/>
        <dbReference type="ChEBI" id="CHEBI:43474"/>
        <dbReference type="ChEBI" id="CHEBI:61977"/>
        <dbReference type="ChEBI" id="CHEBI:83586"/>
        <dbReference type="EC" id="2.7.4.27"/>
    </reaction>
</comment>
<comment type="similarity">
    <text evidence="1">Belongs to the pyruvate, phosphate/water dikinase regulatory protein family. PDRP subfamily.</text>
</comment>
<name>PDRP_BRADU</name>
<accession>Q89WP1</accession>
<organism>
    <name type="scientific">Bradyrhizobium diazoefficiens (strain JCM 10833 / BCRC 13528 / IAM 13628 / NBRC 14792 / USDA 110)</name>
    <dbReference type="NCBI Taxonomy" id="224911"/>
    <lineage>
        <taxon>Bacteria</taxon>
        <taxon>Pseudomonadati</taxon>
        <taxon>Pseudomonadota</taxon>
        <taxon>Alphaproteobacteria</taxon>
        <taxon>Hyphomicrobiales</taxon>
        <taxon>Nitrobacteraceae</taxon>
        <taxon>Bradyrhizobium</taxon>
    </lineage>
</organism>
<feature type="chain" id="PRO_0000196638" description="Putative pyruvate, phosphate dikinase regulatory protein">
    <location>
        <begin position="1"/>
        <end position="279"/>
    </location>
</feature>
<feature type="binding site" evidence="1">
    <location>
        <begin position="153"/>
        <end position="160"/>
    </location>
    <ligand>
        <name>ADP</name>
        <dbReference type="ChEBI" id="CHEBI:456216"/>
    </ligand>
</feature>
<reference key="1">
    <citation type="journal article" date="2002" name="DNA Res.">
        <title>Complete genomic sequence of nitrogen-fixing symbiotic bacterium Bradyrhizobium japonicum USDA110.</title>
        <authorList>
            <person name="Kaneko T."/>
            <person name="Nakamura Y."/>
            <person name="Sato S."/>
            <person name="Minamisawa K."/>
            <person name="Uchiumi T."/>
            <person name="Sasamoto S."/>
            <person name="Watanabe A."/>
            <person name="Idesawa K."/>
            <person name="Iriguchi M."/>
            <person name="Kawashima K."/>
            <person name="Kohara M."/>
            <person name="Matsumoto M."/>
            <person name="Shimpo S."/>
            <person name="Tsuruoka H."/>
            <person name="Wada T."/>
            <person name="Yamada M."/>
            <person name="Tabata S."/>
        </authorList>
    </citation>
    <scope>NUCLEOTIDE SEQUENCE [LARGE SCALE GENOMIC DNA]</scope>
    <source>
        <strain>JCM 10833 / BCRC 13528 / IAM 13628 / NBRC 14792 / USDA 110</strain>
    </source>
</reference>